<proteinExistence type="inferred from homology"/>
<reference key="1">
    <citation type="submission" date="2007-04" db="EMBL/GenBank/DDBJ databases">
        <title>Complete sequence of Shewanella putrefaciens CN-32.</title>
        <authorList>
            <consortium name="US DOE Joint Genome Institute"/>
            <person name="Copeland A."/>
            <person name="Lucas S."/>
            <person name="Lapidus A."/>
            <person name="Barry K."/>
            <person name="Detter J.C."/>
            <person name="Glavina del Rio T."/>
            <person name="Hammon N."/>
            <person name="Israni S."/>
            <person name="Dalin E."/>
            <person name="Tice H."/>
            <person name="Pitluck S."/>
            <person name="Chain P."/>
            <person name="Malfatti S."/>
            <person name="Shin M."/>
            <person name="Vergez L."/>
            <person name="Schmutz J."/>
            <person name="Larimer F."/>
            <person name="Land M."/>
            <person name="Hauser L."/>
            <person name="Kyrpides N."/>
            <person name="Mikhailova N."/>
            <person name="Romine M.F."/>
            <person name="Fredrickson J."/>
            <person name="Tiedje J."/>
            <person name="Richardson P."/>
        </authorList>
    </citation>
    <scope>NUCLEOTIDE SEQUENCE [LARGE SCALE GENOMIC DNA]</scope>
    <source>
        <strain>CN-32 / ATCC BAA-453</strain>
    </source>
</reference>
<gene>
    <name evidence="1" type="primary">katG</name>
    <name type="ordered locus">Sputcn32_0415</name>
</gene>
<evidence type="ECO:0000255" key="1">
    <source>
        <dbReference type="HAMAP-Rule" id="MF_01961"/>
    </source>
</evidence>
<organism>
    <name type="scientific">Shewanella putrefaciens (strain CN-32 / ATCC BAA-453)</name>
    <dbReference type="NCBI Taxonomy" id="319224"/>
    <lineage>
        <taxon>Bacteria</taxon>
        <taxon>Pseudomonadati</taxon>
        <taxon>Pseudomonadota</taxon>
        <taxon>Gammaproteobacteria</taxon>
        <taxon>Alteromonadales</taxon>
        <taxon>Shewanellaceae</taxon>
        <taxon>Shewanella</taxon>
    </lineage>
</organism>
<keyword id="KW-0349">Heme</keyword>
<keyword id="KW-0376">Hydrogen peroxide</keyword>
<keyword id="KW-0408">Iron</keyword>
<keyword id="KW-0479">Metal-binding</keyword>
<keyword id="KW-0560">Oxidoreductase</keyword>
<keyword id="KW-0575">Peroxidase</keyword>
<comment type="function">
    <text evidence="1">Bifunctional enzyme with both catalase and broad-spectrum peroxidase activity.</text>
</comment>
<comment type="catalytic activity">
    <reaction evidence="1">
        <text>H2O2 + AH2 = A + 2 H2O</text>
        <dbReference type="Rhea" id="RHEA:30275"/>
        <dbReference type="ChEBI" id="CHEBI:13193"/>
        <dbReference type="ChEBI" id="CHEBI:15377"/>
        <dbReference type="ChEBI" id="CHEBI:16240"/>
        <dbReference type="ChEBI" id="CHEBI:17499"/>
        <dbReference type="EC" id="1.11.1.21"/>
    </reaction>
</comment>
<comment type="catalytic activity">
    <reaction evidence="1">
        <text>2 H2O2 = O2 + 2 H2O</text>
        <dbReference type="Rhea" id="RHEA:20309"/>
        <dbReference type="ChEBI" id="CHEBI:15377"/>
        <dbReference type="ChEBI" id="CHEBI:15379"/>
        <dbReference type="ChEBI" id="CHEBI:16240"/>
        <dbReference type="EC" id="1.11.1.21"/>
    </reaction>
</comment>
<comment type="cofactor">
    <cofactor evidence="1">
        <name>heme b</name>
        <dbReference type="ChEBI" id="CHEBI:60344"/>
    </cofactor>
    <text evidence="1">Binds 1 heme b (iron(II)-protoporphyrin IX) group per dimer.</text>
</comment>
<comment type="subunit">
    <text evidence="1">Homodimer or homotetramer.</text>
</comment>
<comment type="PTM">
    <text evidence="1">Formation of the three residue Trp-Tyr-Met cross-link is important for the catalase, but not the peroxidase activity of the enzyme.</text>
</comment>
<comment type="similarity">
    <text evidence="1">Belongs to the peroxidase family. Peroxidase/catalase subfamily.</text>
</comment>
<sequence>MDKTHSSQGKCPVMHGGNTSVTTNNMDWWPKALNLDILHQHDKKTDPMDPTFNYSEAFKTLDLAAVKQDLYALMTDSQDWWPADWGHYGGLMIRMAWHSAGTYRIADGRGGAGTGNQRFAPLNSWPDNANLDKARRLLWPIKKKYGNKLSWADLIILAGNVAYESMGLKTYGFAGGRADIWHPEKDIYWGSEKQWLAPSDNPNSRYSGERDLENPLAAVMMGLIYVNPEGVDGNPDPLRTAQDIRITFARMAMDDEETVALTAGGHTVGKCHGNGKAQNLGPEPEAEDVEAQGLGWLNKHGRGVGRNTVTSGIEGAWTTHPTQWDNGYFSLLLGYDWELKKSPAGAWQWEPINIKEEDKPVDVEDPTIRHNPIMTDADMAMKMDPEYRKISEKFYKDPAYFSEVFARAWFKLTHRDLGPKSRYLGPEVPAEDLIWQDPIPQVDYRLSDDDITALKAKILASGLSIAELVTTAWDSARTFRGSDYRGGANGARIRLAPQKDWEGNEPVRLQKVLKVLTDIQTGLSQKVSIADLIVLGGTAAVEKAAQDAGVNIRVPFASGRGDASQEMTDIESFAVLEPLHDAYRNWQKKDYVVQPEELMLDRTQLMGLTAHEMTVLIGGMRVLGANYAGSAHGVFTDRVGVLSNDFFVNLTDMSYNWKPAGNNLYQIIERKTGTVKWTATRVDLVFGSNSVLRSYAEIYAQDDAKEKFVHDFVNAWTKVMNADRFDLA</sequence>
<dbReference type="EC" id="1.11.1.21" evidence="1"/>
<dbReference type="EMBL" id="CP000681">
    <property type="protein sequence ID" value="ABP74147.1"/>
    <property type="molecule type" value="Genomic_DNA"/>
</dbReference>
<dbReference type="SMR" id="A4Y2G4"/>
<dbReference type="STRING" id="319224.Sputcn32_0415"/>
<dbReference type="PeroxiBase" id="3615">
    <property type="entry name" value="SputCP01_CN-32"/>
</dbReference>
<dbReference type="KEGG" id="spc:Sputcn32_0415"/>
<dbReference type="eggNOG" id="COG0376">
    <property type="taxonomic scope" value="Bacteria"/>
</dbReference>
<dbReference type="HOGENOM" id="CLU_025424_2_0_6"/>
<dbReference type="GO" id="GO:0005829">
    <property type="term" value="C:cytosol"/>
    <property type="evidence" value="ECO:0007669"/>
    <property type="project" value="TreeGrafter"/>
</dbReference>
<dbReference type="GO" id="GO:0004096">
    <property type="term" value="F:catalase activity"/>
    <property type="evidence" value="ECO:0007669"/>
    <property type="project" value="UniProtKB-UniRule"/>
</dbReference>
<dbReference type="GO" id="GO:0020037">
    <property type="term" value="F:heme binding"/>
    <property type="evidence" value="ECO:0007669"/>
    <property type="project" value="InterPro"/>
</dbReference>
<dbReference type="GO" id="GO:0046872">
    <property type="term" value="F:metal ion binding"/>
    <property type="evidence" value="ECO:0007669"/>
    <property type="project" value="UniProtKB-KW"/>
</dbReference>
<dbReference type="GO" id="GO:0070301">
    <property type="term" value="P:cellular response to hydrogen peroxide"/>
    <property type="evidence" value="ECO:0007669"/>
    <property type="project" value="TreeGrafter"/>
</dbReference>
<dbReference type="GO" id="GO:0042744">
    <property type="term" value="P:hydrogen peroxide catabolic process"/>
    <property type="evidence" value="ECO:0007669"/>
    <property type="project" value="UniProtKB-KW"/>
</dbReference>
<dbReference type="CDD" id="cd00649">
    <property type="entry name" value="catalase_peroxidase_1"/>
    <property type="match status" value="1"/>
</dbReference>
<dbReference type="CDD" id="cd08200">
    <property type="entry name" value="catalase_peroxidase_2"/>
    <property type="match status" value="1"/>
</dbReference>
<dbReference type="FunFam" id="1.10.420.10:FF:000002">
    <property type="entry name" value="Catalase-peroxidase"/>
    <property type="match status" value="1"/>
</dbReference>
<dbReference type="FunFam" id="1.10.420.10:FF:000004">
    <property type="entry name" value="Catalase-peroxidase"/>
    <property type="match status" value="1"/>
</dbReference>
<dbReference type="FunFam" id="1.10.520.10:FF:000002">
    <property type="entry name" value="Catalase-peroxidase"/>
    <property type="match status" value="1"/>
</dbReference>
<dbReference type="Gene3D" id="1.10.520.10">
    <property type="match status" value="2"/>
</dbReference>
<dbReference type="Gene3D" id="1.10.420.10">
    <property type="entry name" value="Peroxidase, domain 2"/>
    <property type="match status" value="2"/>
</dbReference>
<dbReference type="HAMAP" id="MF_01961">
    <property type="entry name" value="Catal_peroxid"/>
    <property type="match status" value="1"/>
</dbReference>
<dbReference type="InterPro" id="IPR000763">
    <property type="entry name" value="Catalase_peroxidase"/>
</dbReference>
<dbReference type="InterPro" id="IPR002016">
    <property type="entry name" value="Haem_peroxidase"/>
</dbReference>
<dbReference type="InterPro" id="IPR010255">
    <property type="entry name" value="Haem_peroxidase_sf"/>
</dbReference>
<dbReference type="InterPro" id="IPR019794">
    <property type="entry name" value="Peroxidases_AS"/>
</dbReference>
<dbReference type="NCBIfam" id="TIGR00198">
    <property type="entry name" value="cat_per_HPI"/>
    <property type="match status" value="1"/>
</dbReference>
<dbReference type="NCBIfam" id="NF011635">
    <property type="entry name" value="PRK15061.1"/>
    <property type="match status" value="1"/>
</dbReference>
<dbReference type="PANTHER" id="PTHR30555:SF6">
    <property type="entry name" value="CATALASE-PEROXIDASE"/>
    <property type="match status" value="1"/>
</dbReference>
<dbReference type="PANTHER" id="PTHR30555">
    <property type="entry name" value="HYDROPEROXIDASE I, BIFUNCTIONAL CATALASE-PEROXIDASE"/>
    <property type="match status" value="1"/>
</dbReference>
<dbReference type="Pfam" id="PF00141">
    <property type="entry name" value="peroxidase"/>
    <property type="match status" value="2"/>
</dbReference>
<dbReference type="PRINTS" id="PR00460">
    <property type="entry name" value="BPEROXIDASE"/>
</dbReference>
<dbReference type="PRINTS" id="PR00458">
    <property type="entry name" value="PEROXIDASE"/>
</dbReference>
<dbReference type="SUPFAM" id="SSF48113">
    <property type="entry name" value="Heme-dependent peroxidases"/>
    <property type="match status" value="2"/>
</dbReference>
<dbReference type="PROSITE" id="PS00436">
    <property type="entry name" value="PEROXIDASE_2"/>
    <property type="match status" value="1"/>
</dbReference>
<dbReference type="PROSITE" id="PS50873">
    <property type="entry name" value="PEROXIDASE_4"/>
    <property type="match status" value="1"/>
</dbReference>
<feature type="chain" id="PRO_0000354922" description="Catalase-peroxidase">
    <location>
        <begin position="1"/>
        <end position="728"/>
    </location>
</feature>
<feature type="active site" description="Proton acceptor" evidence="1">
    <location>
        <position position="98"/>
    </location>
</feature>
<feature type="binding site" description="axial binding residue" evidence="1">
    <location>
        <position position="266"/>
    </location>
    <ligand>
        <name>heme b</name>
        <dbReference type="ChEBI" id="CHEBI:60344"/>
    </ligand>
    <ligandPart>
        <name>Fe</name>
        <dbReference type="ChEBI" id="CHEBI:18248"/>
    </ligandPart>
</feature>
<feature type="site" description="Transition state stabilizer" evidence="1">
    <location>
        <position position="94"/>
    </location>
</feature>
<feature type="cross-link" description="Tryptophyl-tyrosyl-methioninium (Trp-Tyr) (with M-251)" evidence="1">
    <location>
        <begin position="97"/>
        <end position="225"/>
    </location>
</feature>
<feature type="cross-link" description="Tryptophyl-tyrosyl-methioninium (Tyr-Met) (with W-97)" evidence="1">
    <location>
        <begin position="225"/>
        <end position="251"/>
    </location>
</feature>
<accession>A4Y2G4</accession>
<name>KATG_SHEPC</name>
<protein>
    <recommendedName>
        <fullName evidence="1">Catalase-peroxidase</fullName>
        <shortName evidence="1">CP</shortName>
        <ecNumber evidence="1">1.11.1.21</ecNumber>
    </recommendedName>
    <alternativeName>
        <fullName evidence="1">Peroxidase/catalase</fullName>
    </alternativeName>
</protein>